<proteinExistence type="evidence at protein level"/>
<organism>
    <name type="scientific">Gardenia jasminoides</name>
    <name type="common">Cape jasmine</name>
    <name type="synonym">Gardenia augusta</name>
    <dbReference type="NCBI Taxonomy" id="114476"/>
    <lineage>
        <taxon>Eukaryota</taxon>
        <taxon>Viridiplantae</taxon>
        <taxon>Streptophyta</taxon>
        <taxon>Embryophyta</taxon>
        <taxon>Tracheophyta</taxon>
        <taxon>Spermatophyta</taxon>
        <taxon>Magnoliopsida</taxon>
        <taxon>eudicotyledons</taxon>
        <taxon>Gunneridae</taxon>
        <taxon>Pentapetalae</taxon>
        <taxon>asterids</taxon>
        <taxon>lamiids</taxon>
        <taxon>Gentianales</taxon>
        <taxon>Rubiaceae</taxon>
        <taxon>Ixoroideae</taxon>
        <taxon>Gardenieae complex</taxon>
        <taxon>Gardenieae - Pavetteae clade</taxon>
        <taxon>Gardenieae</taxon>
        <taxon>Gardenia</taxon>
    </lineage>
</organism>
<name>UGT1_GARJA</name>
<sequence length="474" mass="53008">MVQQRHVLLITYPAQGHINPALQFAQRLLRMGIQVTLATSVYALSRMKKSSGSTPKGLTFATFSDGYDDGFRPKGVDHTEYMSSLAKQGSNTLRNVINTSADQGCPVTCLVYTLLLPWAATVARECHIPSALLWIQPVAVMDIYYYYFRGYEDDVKNNSNDPTWSIQFPGLPSMKAKDLPSFILPSSDNIYSFALPTFKKQLETLDEEERPKVLVNTFDALEPQALKAIESYNLIAIGPLTPSAFLDGKDPSETSFSGDLFQKSKDYKEWLNSRPAGSVVYVSFGSLLTLPKQQMEEIARGLLKSGRPFLWVIRAKENGEEEKEEDRLICMEELEEQGMIVPWCSQIEVLTHPSLGCFVTHCGWNSTLETLVCGVPVVAFPHWTDQGTNAKLIEDVWETGVRVVPNEDGTVESDEIKRCIETVMDDGEKGVELKRNAKKWKELAREAMQEDGSSDKNLKAFVEDAGKGYQAESN</sequence>
<comment type="function">
    <text evidence="4">Glucosyltransferase acting on a broad range of substrates, including crocetin, 4-coumaric acid, caffeic acid and ferulic acid. No activity with indol-3-acetic acid, bixin and norbixin, and no formation of O-glucosides. Involved with UGT94E5 in sequential glycosylation of crocetin to crocin (bis(beta-D-gentiobiosyl) crocetin).</text>
</comment>
<comment type="catalytic activity">
    <reaction evidence="4">
        <text>crocetin + UDP-alpha-D-glucose = beta-D-glucosyl crocetin + UDP</text>
        <dbReference type="Rhea" id="RHEA:31463"/>
        <dbReference type="ChEBI" id="CHEBI:58223"/>
        <dbReference type="ChEBI" id="CHEBI:58885"/>
        <dbReference type="ChEBI" id="CHEBI:62766"/>
        <dbReference type="ChEBI" id="CHEBI:62767"/>
        <dbReference type="EC" id="2.4.1.271"/>
    </reaction>
</comment>
<comment type="catalytic activity">
    <reaction evidence="4">
        <text>beta-D-glucosyl crocetin + UDP-alpha-D-glucose = bis(beta-D-glucosyl) crocetin + UDP</text>
        <dbReference type="Rhea" id="RHEA:31467"/>
        <dbReference type="ChEBI" id="CHEBI:58223"/>
        <dbReference type="ChEBI" id="CHEBI:58885"/>
        <dbReference type="ChEBI" id="CHEBI:62766"/>
        <dbReference type="ChEBI" id="CHEBI:62768"/>
        <dbReference type="EC" id="2.4.1.271"/>
    </reaction>
</comment>
<comment type="catalytic activity">
    <reaction evidence="4">
        <text>beta-D-gentiobiosyl crocetin + UDP-alpha-D-glucose = beta-D-gentiobiosyl beta-D-glucosyl crocetin + UDP</text>
        <dbReference type="Rhea" id="RHEA:31471"/>
        <dbReference type="ChEBI" id="CHEBI:58223"/>
        <dbReference type="ChEBI" id="CHEBI:58885"/>
        <dbReference type="ChEBI" id="CHEBI:62770"/>
        <dbReference type="ChEBI" id="CHEBI:62771"/>
        <dbReference type="EC" id="2.4.1.271"/>
    </reaction>
</comment>
<comment type="biophysicochemical properties">
    <kinetics>
        <KM evidence="4">0.46 mM for crocetin</KM>
        <KM evidence="4">1.5 mM for 4-coumaric acid</KM>
        <KM evidence="4">2.5 mM for caffeic acid</KM>
        <KM evidence="4">1.7 mM for ferulic acid</KM>
    </kinetics>
</comment>
<comment type="subcellular location">
    <subcellularLocation>
        <location evidence="5">Plastid</location>
        <location evidence="5">Chloroplast</location>
    </subcellularLocation>
</comment>
<comment type="tissue specificity">
    <text evidence="4">Ubiquitous.</text>
</comment>
<comment type="miscellaneous">
    <text evidence="6">Crocin is a yellow pigment that accumulates during fruit development. No other crocetin glucosyl esters detected in neither flowers, leaves, nor stems. No correlation between mRNA expression and pigment accumulation (PubMed:22569263).</text>
</comment>
<comment type="similarity">
    <text evidence="5">Belongs to the UDP-glycosyltransferase family.</text>
</comment>
<accession>F8WKW0</accession>
<evidence type="ECO:0000250" key="1">
    <source>
        <dbReference type="UniProtKB" id="A0A0A1HA03"/>
    </source>
</evidence>
<evidence type="ECO:0000250" key="2">
    <source>
        <dbReference type="UniProtKB" id="P51094"/>
    </source>
</evidence>
<evidence type="ECO:0000255" key="3"/>
<evidence type="ECO:0000269" key="4">
    <source>
    </source>
</evidence>
<evidence type="ECO:0000305" key="5"/>
<evidence type="ECO:0000305" key="6">
    <source>
    </source>
</evidence>
<gene>
    <name type="primary">UGT75L6</name>
    <name type="synonym">UGT1</name>
</gene>
<feature type="transit peptide" description="Chloroplast" evidence="3">
    <location>
        <begin position="1"/>
        <end position="45"/>
    </location>
</feature>
<feature type="chain" id="PRO_0000430136" description="Crocetin glucosyltransferase, chloroplastic">
    <location>
        <begin position="46"/>
        <end position="474"/>
    </location>
</feature>
<feature type="active site" description="Proton acceptor" evidence="1">
    <location>
        <position position="17"/>
    </location>
</feature>
<feature type="binding site" evidence="2">
    <location>
        <position position="17"/>
    </location>
    <ligand>
        <name>an anthocyanidin</name>
        <dbReference type="ChEBI" id="CHEBI:143576"/>
    </ligand>
</feature>
<feature type="binding site" evidence="1">
    <location>
        <position position="346"/>
    </location>
    <ligand>
        <name>UDP-alpha-D-glucose</name>
        <dbReference type="ChEBI" id="CHEBI:58885"/>
    </ligand>
</feature>
<feature type="binding site" evidence="1">
    <location>
        <position position="361"/>
    </location>
    <ligand>
        <name>UDP-alpha-D-glucose</name>
        <dbReference type="ChEBI" id="CHEBI:58885"/>
    </ligand>
</feature>
<feature type="binding site" evidence="1">
    <location>
        <position position="364"/>
    </location>
    <ligand>
        <name>UDP-alpha-D-glucose</name>
        <dbReference type="ChEBI" id="CHEBI:58885"/>
    </ligand>
</feature>
<feature type="binding site" evidence="1">
    <location>
        <position position="365"/>
    </location>
    <ligand>
        <name>UDP-alpha-D-glucose</name>
        <dbReference type="ChEBI" id="CHEBI:58885"/>
    </ligand>
</feature>
<feature type="binding site" evidence="1">
    <location>
        <position position="366"/>
    </location>
    <ligand>
        <name>UDP-alpha-D-glucose</name>
        <dbReference type="ChEBI" id="CHEBI:58885"/>
    </ligand>
</feature>
<feature type="binding site" evidence="1">
    <location>
        <position position="369"/>
    </location>
    <ligand>
        <name>UDP-alpha-D-glucose</name>
        <dbReference type="ChEBI" id="CHEBI:58885"/>
    </ligand>
</feature>
<feature type="binding site" evidence="1">
    <location>
        <position position="385"/>
    </location>
    <ligand>
        <name>UDP-alpha-D-glucose</name>
        <dbReference type="ChEBI" id="CHEBI:58885"/>
    </ligand>
</feature>
<feature type="binding site" evidence="1">
    <location>
        <position position="386"/>
    </location>
    <ligand>
        <name>UDP-alpha-D-glucose</name>
        <dbReference type="ChEBI" id="CHEBI:58885"/>
    </ligand>
</feature>
<protein>
    <recommendedName>
        <fullName>Crocetin glucosyltransferase, chloroplastic</fullName>
        <ecNumber>2.4.1.271</ecNumber>
    </recommendedName>
    <alternativeName>
        <fullName>UDP-glucose glucosyltransferase 1</fullName>
        <shortName>GjUGT1</shortName>
    </alternativeName>
    <alternativeName>
        <fullName>UDP-glycosyltransferase 75L6</fullName>
    </alternativeName>
</protein>
<keyword id="KW-0150">Chloroplast</keyword>
<keyword id="KW-0328">Glycosyltransferase</keyword>
<keyword id="KW-0934">Plastid</keyword>
<keyword id="KW-0808">Transferase</keyword>
<keyword id="KW-0809">Transit peptide</keyword>
<dbReference type="EC" id="2.4.1.271"/>
<dbReference type="EMBL" id="AB555731">
    <property type="protein sequence ID" value="BAK55736.1"/>
    <property type="molecule type" value="mRNA"/>
</dbReference>
<dbReference type="SMR" id="F8WKW0"/>
<dbReference type="CAZy" id="GT1">
    <property type="family name" value="Glycosyltransferase Family 1"/>
</dbReference>
<dbReference type="KEGG" id="ag:BAK55736"/>
<dbReference type="BioCyc" id="MetaCyc:MONOMER-18779"/>
<dbReference type="GO" id="GO:0009507">
    <property type="term" value="C:chloroplast"/>
    <property type="evidence" value="ECO:0007669"/>
    <property type="project" value="UniProtKB-SubCell"/>
</dbReference>
<dbReference type="GO" id="GO:0080043">
    <property type="term" value="F:quercetin 3-O-glucosyltransferase activity"/>
    <property type="evidence" value="ECO:0007669"/>
    <property type="project" value="TreeGrafter"/>
</dbReference>
<dbReference type="GO" id="GO:0080044">
    <property type="term" value="F:quercetin 7-O-glucosyltransferase activity"/>
    <property type="evidence" value="ECO:0007669"/>
    <property type="project" value="TreeGrafter"/>
</dbReference>
<dbReference type="CDD" id="cd03784">
    <property type="entry name" value="GT1_Gtf-like"/>
    <property type="match status" value="1"/>
</dbReference>
<dbReference type="FunFam" id="3.40.50.2000:FF:000019">
    <property type="entry name" value="Glycosyltransferase"/>
    <property type="match status" value="1"/>
</dbReference>
<dbReference type="FunFam" id="3.40.50.2000:FF:000167">
    <property type="entry name" value="Glycosyltransferase"/>
    <property type="match status" value="1"/>
</dbReference>
<dbReference type="Gene3D" id="3.40.50.2000">
    <property type="entry name" value="Glycogen Phosphorylase B"/>
    <property type="match status" value="2"/>
</dbReference>
<dbReference type="InterPro" id="IPR002213">
    <property type="entry name" value="UDP_glucos_trans"/>
</dbReference>
<dbReference type="InterPro" id="IPR035595">
    <property type="entry name" value="UDP_glycos_trans_CS"/>
</dbReference>
<dbReference type="PANTHER" id="PTHR11926">
    <property type="entry name" value="GLUCOSYL/GLUCURONOSYL TRANSFERASES"/>
    <property type="match status" value="1"/>
</dbReference>
<dbReference type="PANTHER" id="PTHR11926:SF870">
    <property type="entry name" value="UDP-GLYCOSYLTRANSFERASE 75B1"/>
    <property type="match status" value="1"/>
</dbReference>
<dbReference type="Pfam" id="PF00201">
    <property type="entry name" value="UDPGT"/>
    <property type="match status" value="1"/>
</dbReference>
<dbReference type="SUPFAM" id="SSF53756">
    <property type="entry name" value="UDP-Glycosyltransferase/glycogen phosphorylase"/>
    <property type="match status" value="1"/>
</dbReference>
<dbReference type="PROSITE" id="PS00375">
    <property type="entry name" value="UDPGT"/>
    <property type="match status" value="1"/>
</dbReference>
<reference key="1">
    <citation type="journal article" date="2011" name="J. Biol. Chem.">
        <title>Iridoid-specific Glucosyltransferase from Gardenia jasminoides.</title>
        <authorList>
            <person name="Nagatoshi M."/>
            <person name="Terasaka K."/>
            <person name="Nagatsu A."/>
            <person name="Mizukami H."/>
        </authorList>
    </citation>
    <scope>NUCLEOTIDE SEQUENCE [MRNA]</scope>
</reference>
<reference key="2">
    <citation type="journal article" date="2012" name="FEBS Lett.">
        <title>UGT75L6 and UGT94E5 mediate sequential glucosylation of crocetin to crocin in Gardenia jasminoides.</title>
        <authorList>
            <person name="Nagatoshi M."/>
            <person name="Terasaka K."/>
            <person name="Owaki M."/>
            <person name="Sota M."/>
            <person name="Inukai T."/>
            <person name="Nagatsu A."/>
            <person name="Mizukami H."/>
        </authorList>
    </citation>
    <scope>FUNCTION</scope>
    <scope>CATALYTIC ACTIVITY</scope>
    <scope>BIOPHYSICOCHEMICAL PROPERTIES</scope>
    <scope>TISSUE SPECIFICITY</scope>
</reference>